<comment type="catalytic activity">
    <reaction>
        <text>Cyclizes part of a (1-&gt;4)-alpha-D-glucan chain by formation of a (1-&gt;4)-alpha-D-glucosidic bond.</text>
        <dbReference type="EC" id="2.4.1.19"/>
    </reaction>
</comment>
<comment type="cofactor">
    <cofactor>
        <name>Ca(2+)</name>
        <dbReference type="ChEBI" id="CHEBI:29108"/>
    </cofactor>
    <text>Binds 2 calcium ions per subunit.</text>
</comment>
<comment type="subunit">
    <text>Monomer.</text>
</comment>
<comment type="subcellular location">
    <subcellularLocation>
        <location evidence="1">Secreted</location>
    </subcellularLocation>
</comment>
<comment type="domain">
    <text>May consist of two protein domains: the one in the N-terminal side cleaves the alpha-1,4-glucosidic bond in starch, and the other in the C-terminal side catalyzes other activities, including the reconstitution of an alpha-1,4-glucosidic linkage for cyclizing the maltooligosaccharide produced.</text>
</comment>
<comment type="similarity">
    <text evidence="3">Belongs to the glycosyl hydrolase 13 family.</text>
</comment>
<name>CDGT1_NIACI</name>
<proteinExistence type="evidence at protein level"/>
<dbReference type="EC" id="2.4.1.19"/>
<dbReference type="EMBL" id="X68326">
    <property type="protein sequence ID" value="CAA48401.1"/>
    <property type="molecule type" value="Genomic_DNA"/>
</dbReference>
<dbReference type="PIR" id="S23674">
    <property type="entry name" value="ALBSGC"/>
</dbReference>
<dbReference type="PDB" id="1CGT">
    <property type="method" value="X-ray"/>
    <property type="resolution" value="2.00 A"/>
    <property type="chains" value="A=35-718"/>
</dbReference>
<dbReference type="PDB" id="1CGU">
    <property type="method" value="X-ray"/>
    <property type="resolution" value="2.50 A"/>
    <property type="chains" value="A=35-718"/>
</dbReference>
<dbReference type="PDB" id="3CGT">
    <property type="method" value="X-ray"/>
    <property type="resolution" value="2.40 A"/>
    <property type="chains" value="A=35-718"/>
</dbReference>
<dbReference type="PDB" id="4CGT">
    <property type="method" value="X-ray"/>
    <property type="resolution" value="2.60 A"/>
    <property type="chains" value="A=35-718"/>
</dbReference>
<dbReference type="PDB" id="5CGT">
    <property type="method" value="X-ray"/>
    <property type="resolution" value="2.50 A"/>
    <property type="chains" value="A=35-718"/>
</dbReference>
<dbReference type="PDB" id="6CGT">
    <property type="method" value="X-ray"/>
    <property type="resolution" value="2.60 A"/>
    <property type="chains" value="A=35-718"/>
</dbReference>
<dbReference type="PDB" id="7CGT">
    <property type="method" value="X-ray"/>
    <property type="resolution" value="3.00 A"/>
    <property type="chains" value="A=35-718"/>
</dbReference>
<dbReference type="PDB" id="8CGT">
    <property type="method" value="X-ray"/>
    <property type="resolution" value="2.40 A"/>
    <property type="chains" value="A=35-718"/>
</dbReference>
<dbReference type="PDB" id="9CGT">
    <property type="method" value="X-ray"/>
    <property type="resolution" value="2.50 A"/>
    <property type="chains" value="A=35-718"/>
</dbReference>
<dbReference type="PDBsum" id="1CGT"/>
<dbReference type="PDBsum" id="1CGU"/>
<dbReference type="PDBsum" id="3CGT"/>
<dbReference type="PDBsum" id="4CGT"/>
<dbReference type="PDBsum" id="5CGT"/>
<dbReference type="PDBsum" id="6CGT"/>
<dbReference type="PDBsum" id="7CGT"/>
<dbReference type="PDBsum" id="8CGT"/>
<dbReference type="PDBsum" id="9CGT"/>
<dbReference type="SMR" id="P30920"/>
<dbReference type="DrugBank" id="DB01789">
    <property type="generic name" value="1-Amino-2,3-Dihydroxy-5-Hydroxymethyl Cyclohex-5-Ene"/>
</dbReference>
<dbReference type="DrugBank" id="DB02469">
    <property type="generic name" value="4,6-dideoxy-4-amino-beta-D-glucopyranoside"/>
</dbReference>
<dbReference type="DrugBank" id="DB01841">
    <property type="generic name" value="4,6-Dideoxyglucose"/>
</dbReference>
<dbReference type="DrugBank" id="DB02670">
    <property type="generic name" value="4-Deoxy-Alpha-D-Glucose"/>
</dbReference>
<dbReference type="DrugBank" id="DB02120">
    <property type="generic name" value="6-Amino-4-Hydroxymethyl-Cyclohex-4-Ene-1,2,3-Triol"/>
</dbReference>
<dbReference type="DrugBank" id="DB01909">
    <property type="generic name" value="Alpha-Cyclodextrin (Cyclohexa-Amylose)"/>
</dbReference>
<dbReference type="DrugBank" id="DB03773">
    <property type="generic name" value="alpha-D-quinovopyranose"/>
</dbReference>
<dbReference type="DrugBank" id="DB02379">
    <property type="generic name" value="Beta-D-Glucose"/>
</dbReference>
<dbReference type="DrugBank" id="DB03323">
    <property type="generic name" value="Maltose"/>
</dbReference>
<dbReference type="DrugBank" id="DB02394">
    <property type="generic name" value="Oxiranpseudoglucose"/>
</dbReference>
<dbReference type="DrugBank" id="DB03198">
    <property type="generic name" value="Thio-Maltohexaose"/>
</dbReference>
<dbReference type="DrugBank" id="DB01719">
    <property type="generic name" value="Thio-Maltopentaose"/>
</dbReference>
<dbReference type="CAZy" id="CBM20">
    <property type="family name" value="Carbohydrate-Binding Module Family 20"/>
</dbReference>
<dbReference type="CAZy" id="GH13">
    <property type="family name" value="Glycoside Hydrolase Family 13"/>
</dbReference>
<dbReference type="BRENDA" id="2.4.1.19">
    <property type="organism ID" value="649"/>
</dbReference>
<dbReference type="EvolutionaryTrace" id="P30920"/>
<dbReference type="GO" id="GO:0005576">
    <property type="term" value="C:extracellular region"/>
    <property type="evidence" value="ECO:0007669"/>
    <property type="project" value="UniProtKB-SubCell"/>
</dbReference>
<dbReference type="GO" id="GO:0004556">
    <property type="term" value="F:alpha-amylase activity"/>
    <property type="evidence" value="ECO:0007669"/>
    <property type="project" value="InterPro"/>
</dbReference>
<dbReference type="GO" id="GO:0043895">
    <property type="term" value="F:cyclomaltodextrin glucanotransferase activity"/>
    <property type="evidence" value="ECO:0007669"/>
    <property type="project" value="UniProtKB-EC"/>
</dbReference>
<dbReference type="GO" id="GO:0046872">
    <property type="term" value="F:metal ion binding"/>
    <property type="evidence" value="ECO:0007669"/>
    <property type="project" value="UniProtKB-KW"/>
</dbReference>
<dbReference type="GO" id="GO:2001070">
    <property type="term" value="F:starch binding"/>
    <property type="evidence" value="ECO:0007669"/>
    <property type="project" value="InterPro"/>
</dbReference>
<dbReference type="GO" id="GO:0005975">
    <property type="term" value="P:carbohydrate metabolic process"/>
    <property type="evidence" value="ECO:0007669"/>
    <property type="project" value="InterPro"/>
</dbReference>
<dbReference type="CDD" id="cd11320">
    <property type="entry name" value="AmyAc_AmyMalt_CGTase_like"/>
    <property type="match status" value="1"/>
</dbReference>
<dbReference type="CDD" id="cd00604">
    <property type="entry name" value="IPT_CGTD"/>
    <property type="match status" value="1"/>
</dbReference>
<dbReference type="Gene3D" id="3.20.20.80">
    <property type="entry name" value="Glycosidases"/>
    <property type="match status" value="1"/>
</dbReference>
<dbReference type="Gene3D" id="2.60.40.1180">
    <property type="entry name" value="Golgi alpha-mannosidase II"/>
    <property type="match status" value="1"/>
</dbReference>
<dbReference type="Gene3D" id="2.60.40.10">
    <property type="entry name" value="Immunoglobulins"/>
    <property type="match status" value="2"/>
</dbReference>
<dbReference type="InterPro" id="IPR006048">
    <property type="entry name" value="A-amylase/branching_C"/>
</dbReference>
<dbReference type="InterPro" id="IPR031319">
    <property type="entry name" value="A-amylase_C"/>
</dbReference>
<dbReference type="InterPro" id="IPR006046">
    <property type="entry name" value="Alpha_amylase"/>
</dbReference>
<dbReference type="InterPro" id="IPR013784">
    <property type="entry name" value="Carb-bd-like_fold"/>
</dbReference>
<dbReference type="InterPro" id="IPR002044">
    <property type="entry name" value="CBM20"/>
</dbReference>
<dbReference type="InterPro" id="IPR006047">
    <property type="entry name" value="Glyco_hydro_13_cat_dom"/>
</dbReference>
<dbReference type="InterPro" id="IPR013780">
    <property type="entry name" value="Glyco_hydro_b"/>
</dbReference>
<dbReference type="InterPro" id="IPR017853">
    <property type="entry name" value="Glycoside_hydrolase_SF"/>
</dbReference>
<dbReference type="InterPro" id="IPR013783">
    <property type="entry name" value="Ig-like_fold"/>
</dbReference>
<dbReference type="InterPro" id="IPR014756">
    <property type="entry name" value="Ig_E-set"/>
</dbReference>
<dbReference type="InterPro" id="IPR002909">
    <property type="entry name" value="IPT_dom"/>
</dbReference>
<dbReference type="InterPro" id="IPR006311">
    <property type="entry name" value="TAT_signal"/>
</dbReference>
<dbReference type="PANTHER" id="PTHR10357:SF215">
    <property type="entry name" value="ALPHA-AMYLASE 1"/>
    <property type="match status" value="1"/>
</dbReference>
<dbReference type="PANTHER" id="PTHR10357">
    <property type="entry name" value="ALPHA-AMYLASE FAMILY MEMBER"/>
    <property type="match status" value="1"/>
</dbReference>
<dbReference type="Pfam" id="PF00128">
    <property type="entry name" value="Alpha-amylase"/>
    <property type="match status" value="1"/>
</dbReference>
<dbReference type="Pfam" id="PF02806">
    <property type="entry name" value="Alpha-amylase_C"/>
    <property type="match status" value="1"/>
</dbReference>
<dbReference type="Pfam" id="PF00686">
    <property type="entry name" value="CBM_20"/>
    <property type="match status" value="1"/>
</dbReference>
<dbReference type="Pfam" id="PF01833">
    <property type="entry name" value="TIG"/>
    <property type="match status" value="1"/>
</dbReference>
<dbReference type="PRINTS" id="PR00110">
    <property type="entry name" value="ALPHAAMYLASE"/>
</dbReference>
<dbReference type="SMART" id="SM00642">
    <property type="entry name" value="Aamy"/>
    <property type="match status" value="1"/>
</dbReference>
<dbReference type="SMART" id="SM00632">
    <property type="entry name" value="Aamy_C"/>
    <property type="match status" value="1"/>
</dbReference>
<dbReference type="SMART" id="SM01065">
    <property type="entry name" value="CBM_2"/>
    <property type="match status" value="1"/>
</dbReference>
<dbReference type="SUPFAM" id="SSF51445">
    <property type="entry name" value="(Trans)glycosidases"/>
    <property type="match status" value="1"/>
</dbReference>
<dbReference type="SUPFAM" id="SSF81296">
    <property type="entry name" value="E set domains"/>
    <property type="match status" value="1"/>
</dbReference>
<dbReference type="SUPFAM" id="SSF51011">
    <property type="entry name" value="Glycosyl hydrolase domain"/>
    <property type="match status" value="1"/>
</dbReference>
<dbReference type="SUPFAM" id="SSF49452">
    <property type="entry name" value="Starch-binding domain-like"/>
    <property type="match status" value="1"/>
</dbReference>
<dbReference type="PROSITE" id="PS51166">
    <property type="entry name" value="CBM20"/>
    <property type="match status" value="1"/>
</dbReference>
<dbReference type="PROSITE" id="PS51318">
    <property type="entry name" value="TAT"/>
    <property type="match status" value="1"/>
</dbReference>
<organism>
    <name type="scientific">Niallia circulans</name>
    <name type="common">Bacillus circulans</name>
    <dbReference type="NCBI Taxonomy" id="1397"/>
    <lineage>
        <taxon>Bacteria</taxon>
        <taxon>Bacillati</taxon>
        <taxon>Bacillota</taxon>
        <taxon>Bacilli</taxon>
        <taxon>Bacillales</taxon>
        <taxon>Bacillaceae</taxon>
        <taxon>Niallia</taxon>
    </lineage>
</organism>
<sequence length="718" mass="78047">MFQMAKRAFLSTTLTLGLLAGSALPFLPASAVYADPDTAVTNKQSFSTDVIYQVFTDRFLDGNPSNNPTGAAYDATCSNLKLYCGGDWQGLINKINDNYFSDLGVTALWISQPVENIFATINYSGVTNTAYHGYWARDFKKTNPYFGTMADFQNLITTAHAKGIKIVIDFAPNHTSPAMETDTSFAENGRLYDNGTLVGGYTNDTNGYFHHNGGSDFSSLENGIYKNLYDLADFNHNNATIDKYFKDAIKLWLDMGVDGIRVDAVKHMPLGWQKSWMSSIYAHKPVFTFGEWFLGSAASDADNTDFANKSGMSLLDFRFNSAVRNVFRDNTSNMYALDSMINSTATDYNQVNDQVTFIDNHDMDRFKTSAVNNRRLEQALAFTLTSRGVPAIYYGTEQYLTGNGDPDNRAKMPSFSKSTTAFNVISKLAPLRKSNPAIAYGSTQQRWINNDVYVYERKFGKSVAVVAVNRNLSTSASITGLSTSLPTGSYTDVLGGVLNGNNITSTNGSINNFTLAAGATAVWQYTTAETTPTIGHVGPVMGKPGNVVTIDGRGFGSTKGTVYFGTTAVTGAAITSWEDTQIKVTIPSVAAGNYAVKVAASGVNSNAYNNFTILTGDQVTVRFVVNNASTTLGQNLYLTGNVAELGNWSTGSTAIGPAFNQVIHQYPTWYYDVSVPAGKQLEFKFFKKNGSTITWESGSNHTFTTPASGTATVTVNWQ</sequence>
<feature type="signal peptide">
    <location>
        <begin position="1"/>
        <end position="34"/>
    </location>
</feature>
<feature type="chain" id="PRO_0000001430" description="Cyclomaltodextrin glucanotransferase">
    <location>
        <begin position="35"/>
        <end position="718"/>
    </location>
</feature>
<feature type="domain" description="IPT/TIG">
    <location>
        <begin position="532"/>
        <end position="612"/>
    </location>
</feature>
<feature type="domain" description="CBM20" evidence="2">
    <location>
        <begin position="613"/>
        <end position="718"/>
    </location>
</feature>
<feature type="region of interest" description="A1">
    <location>
        <begin position="35"/>
        <end position="172"/>
    </location>
</feature>
<feature type="region of interest" description="B">
    <location>
        <begin position="173"/>
        <end position="236"/>
    </location>
</feature>
<feature type="region of interest" description="A2">
    <location>
        <begin position="237"/>
        <end position="440"/>
    </location>
</feature>
<feature type="region of interest" description="C">
    <location>
        <begin position="441"/>
        <end position="528"/>
    </location>
</feature>
<feature type="region of interest" description="D">
    <location>
        <begin position="529"/>
        <end position="614"/>
    </location>
</feature>
<feature type="region of interest" description="E">
    <location>
        <begin position="615"/>
        <end position="718"/>
    </location>
</feature>
<feature type="active site" description="Nucleophile" evidence="1">
    <location>
        <position position="263"/>
    </location>
</feature>
<feature type="active site" description="Proton donor" evidence="1">
    <location>
        <position position="291"/>
    </location>
</feature>
<feature type="binding site">
    <location>
        <position position="61"/>
    </location>
    <ligand>
        <name>Ca(2+)</name>
        <dbReference type="ChEBI" id="CHEBI:29108"/>
        <label>1</label>
    </ligand>
</feature>
<feature type="binding site">
    <location>
        <position position="63"/>
    </location>
    <ligand>
        <name>Ca(2+)</name>
        <dbReference type="ChEBI" id="CHEBI:29108"/>
        <label>1</label>
    </ligand>
</feature>
<feature type="binding site">
    <location>
        <position position="66"/>
    </location>
    <ligand>
        <name>Ca(2+)</name>
        <dbReference type="ChEBI" id="CHEBI:29108"/>
        <label>1</label>
    </ligand>
</feature>
<feature type="binding site">
    <location>
        <position position="67"/>
    </location>
    <ligand>
        <name>Ca(2+)</name>
        <dbReference type="ChEBI" id="CHEBI:29108"/>
        <label>1</label>
    </ligand>
</feature>
<feature type="binding site">
    <location>
        <position position="85"/>
    </location>
    <ligand>
        <name>Ca(2+)</name>
        <dbReference type="ChEBI" id="CHEBI:29108"/>
        <label>1</label>
    </ligand>
</feature>
<feature type="binding site">
    <location>
        <position position="87"/>
    </location>
    <ligand>
        <name>Ca(2+)</name>
        <dbReference type="ChEBI" id="CHEBI:29108"/>
        <label>1</label>
    </ligand>
</feature>
<feature type="binding site">
    <location>
        <begin position="134"/>
        <end position="135"/>
    </location>
    <ligand>
        <name>substrate</name>
    </ligand>
</feature>
<feature type="binding site">
    <location>
        <position position="173"/>
    </location>
    <ligand>
        <name>Ca(2+)</name>
        <dbReference type="ChEBI" id="CHEBI:29108"/>
        <label>2</label>
    </ligand>
</feature>
<feature type="binding site">
    <location>
        <position position="174"/>
    </location>
    <ligand>
        <name>substrate</name>
    </ligand>
</feature>
<feature type="binding site">
    <location>
        <position position="224"/>
    </location>
    <ligand>
        <name>Ca(2+)</name>
        <dbReference type="ChEBI" id="CHEBI:29108"/>
        <label>2</label>
    </ligand>
</feature>
<feature type="binding site" evidence="1">
    <location>
        <begin position="227"/>
        <end position="230"/>
    </location>
    <ligand>
        <name>substrate</name>
    </ligand>
</feature>
<feature type="binding site">
    <location>
        <position position="230"/>
    </location>
    <ligand>
        <name>substrate</name>
    </ligand>
</feature>
<feature type="binding site">
    <location>
        <position position="233"/>
    </location>
    <ligand>
        <name>Ca(2+)</name>
        <dbReference type="ChEBI" id="CHEBI:29108"/>
        <label>2</label>
    </ligand>
</feature>
<feature type="binding site" evidence="1">
    <location>
        <position position="261"/>
    </location>
    <ligand>
        <name>substrate</name>
    </ligand>
</feature>
<feature type="binding site">
    <location>
        <begin position="266"/>
        <end position="267"/>
    </location>
    <ligand>
        <name>substrate</name>
    </ligand>
</feature>
<feature type="binding site">
    <location>
        <position position="267"/>
    </location>
    <ligand>
        <name>Ca(2+)</name>
        <dbReference type="ChEBI" id="CHEBI:29108"/>
        <label>2</label>
    </ligand>
</feature>
<feature type="binding site">
    <location>
        <position position="267"/>
    </location>
    <ligand>
        <name>substrate</name>
    </ligand>
</feature>
<feature type="binding site">
    <location>
        <position position="361"/>
    </location>
    <ligand>
        <name>substrate</name>
    </ligand>
</feature>
<feature type="binding site">
    <location>
        <position position="405"/>
    </location>
    <ligand>
        <name>substrate</name>
    </ligand>
</feature>
<feature type="binding site">
    <location>
        <position position="409"/>
    </location>
    <ligand>
        <name>substrate</name>
    </ligand>
</feature>
<feature type="site" description="Transition state stabilizer" evidence="1">
    <location>
        <position position="362"/>
    </location>
</feature>
<feature type="disulfide bond">
    <location>
        <begin position="77"/>
        <end position="84"/>
    </location>
</feature>
<feature type="strand" evidence="5">
    <location>
        <begin position="37"/>
        <end position="39"/>
    </location>
</feature>
<feature type="strand" evidence="4">
    <location>
        <begin position="51"/>
        <end position="53"/>
    </location>
</feature>
<feature type="helix" evidence="4">
    <location>
        <begin position="56"/>
        <end position="59"/>
    </location>
</feature>
<feature type="helix" evidence="4">
    <location>
        <begin position="64"/>
        <end position="66"/>
    </location>
</feature>
<feature type="helix" evidence="4">
    <location>
        <begin position="70"/>
        <end position="72"/>
    </location>
</feature>
<feature type="helix" evidence="4">
    <location>
        <begin position="88"/>
        <end position="96"/>
    </location>
</feature>
<feature type="helix" evidence="4">
    <location>
        <begin position="99"/>
        <end position="103"/>
    </location>
</feature>
<feature type="strand" evidence="4">
    <location>
        <begin position="107"/>
        <end position="110"/>
    </location>
</feature>
<feature type="strand" evidence="4">
    <location>
        <begin position="114"/>
        <end position="116"/>
    </location>
</feature>
<feature type="strand" evidence="4">
    <location>
        <begin position="121"/>
        <end position="123"/>
    </location>
</feature>
<feature type="strand" evidence="4">
    <location>
        <begin position="126"/>
        <end position="128"/>
    </location>
</feature>
<feature type="strand" evidence="4">
    <location>
        <begin position="135"/>
        <end position="142"/>
    </location>
</feature>
<feature type="turn" evidence="4">
    <location>
        <begin position="144"/>
        <end position="146"/>
    </location>
</feature>
<feature type="helix" evidence="4">
    <location>
        <begin position="149"/>
        <end position="161"/>
    </location>
</feature>
<feature type="strand" evidence="4">
    <location>
        <begin position="165"/>
        <end position="170"/>
    </location>
</feature>
<feature type="strand" evidence="4">
    <location>
        <begin position="174"/>
        <end position="177"/>
    </location>
</feature>
<feature type="turn" evidence="4">
    <location>
        <begin position="186"/>
        <end position="189"/>
    </location>
</feature>
<feature type="strand" evidence="4">
    <location>
        <begin position="191"/>
        <end position="193"/>
    </location>
</feature>
<feature type="strand" evidence="4">
    <location>
        <begin position="196"/>
        <end position="199"/>
    </location>
</feature>
<feature type="strand" evidence="7">
    <location>
        <begin position="201"/>
        <end position="203"/>
    </location>
</feature>
<feature type="strand" evidence="6">
    <location>
        <begin position="217"/>
        <end position="219"/>
    </location>
</feature>
<feature type="helix" evidence="4">
    <location>
        <begin position="220"/>
        <end position="225"/>
    </location>
</feature>
<feature type="strand" evidence="4">
    <location>
        <begin position="226"/>
        <end position="228"/>
    </location>
</feature>
<feature type="strand" evidence="4">
    <location>
        <begin position="231"/>
        <end position="234"/>
    </location>
</feature>
<feature type="helix" evidence="4">
    <location>
        <begin position="239"/>
        <end position="254"/>
    </location>
</feature>
<feature type="strand" evidence="4">
    <location>
        <begin position="259"/>
        <end position="263"/>
    </location>
</feature>
<feature type="helix" evidence="4">
    <location>
        <begin position="265"/>
        <end position="267"/>
    </location>
</feature>
<feature type="helix" evidence="4">
    <location>
        <begin position="270"/>
        <end position="283"/>
    </location>
</feature>
<feature type="strand" evidence="4">
    <location>
        <begin position="287"/>
        <end position="290"/>
    </location>
</feature>
<feature type="strand" evidence="4">
    <location>
        <begin position="295"/>
        <end position="298"/>
    </location>
</feature>
<feature type="helix" evidence="4">
    <location>
        <begin position="301"/>
        <end position="309"/>
    </location>
</feature>
<feature type="strand" evidence="4">
    <location>
        <begin position="310"/>
        <end position="315"/>
    </location>
</feature>
<feature type="helix" evidence="4">
    <location>
        <begin position="317"/>
        <end position="327"/>
    </location>
</feature>
<feature type="helix" evidence="4">
    <location>
        <begin position="334"/>
        <end position="347"/>
    </location>
</feature>
<feature type="helix" evidence="4">
    <location>
        <begin position="351"/>
        <end position="353"/>
    </location>
</feature>
<feature type="strand" evidence="4">
    <location>
        <begin position="354"/>
        <end position="356"/>
    </location>
</feature>
<feature type="strand" evidence="8">
    <location>
        <begin position="369"/>
        <end position="371"/>
    </location>
</feature>
<feature type="helix" evidence="4">
    <location>
        <begin position="373"/>
        <end position="385"/>
    </location>
</feature>
<feature type="strand" evidence="4">
    <location>
        <begin position="386"/>
        <end position="393"/>
    </location>
</feature>
<feature type="helix" evidence="4">
    <location>
        <begin position="396"/>
        <end position="398"/>
    </location>
</feature>
<feature type="helix" evidence="4">
    <location>
        <begin position="407"/>
        <end position="409"/>
    </location>
</feature>
<feature type="helix" evidence="4">
    <location>
        <begin position="420"/>
        <end position="428"/>
    </location>
</feature>
<feature type="helix" evidence="4">
    <location>
        <begin position="431"/>
        <end position="434"/>
    </location>
</feature>
<feature type="helix" evidence="4">
    <location>
        <begin position="436"/>
        <end position="440"/>
    </location>
</feature>
<feature type="strand" evidence="4">
    <location>
        <begin position="442"/>
        <end position="448"/>
    </location>
</feature>
<feature type="strand" evidence="4">
    <location>
        <begin position="450"/>
        <end position="459"/>
    </location>
</feature>
<feature type="strand" evidence="4">
    <location>
        <begin position="462"/>
        <end position="469"/>
    </location>
</feature>
<feature type="strand" evidence="4">
    <location>
        <begin position="476"/>
        <end position="478"/>
    </location>
</feature>
<feature type="strand" evidence="4">
    <location>
        <begin position="487"/>
        <end position="490"/>
    </location>
</feature>
<feature type="turn" evidence="4">
    <location>
        <begin position="493"/>
        <end position="498"/>
    </location>
</feature>
<feature type="strand" evidence="4">
    <location>
        <begin position="503"/>
        <end position="506"/>
    </location>
</feature>
<feature type="strand" evidence="4">
    <location>
        <begin position="513"/>
        <end position="515"/>
    </location>
</feature>
<feature type="strand" evidence="4">
    <location>
        <begin position="520"/>
        <end position="525"/>
    </location>
</feature>
<feature type="strand" evidence="4">
    <location>
        <begin position="533"/>
        <end position="538"/>
    </location>
</feature>
<feature type="strand" evidence="4">
    <location>
        <begin position="540"/>
        <end position="542"/>
    </location>
</feature>
<feature type="strand" evidence="4">
    <location>
        <begin position="547"/>
        <end position="553"/>
    </location>
</feature>
<feature type="strand" evidence="4">
    <location>
        <begin position="561"/>
        <end position="564"/>
    </location>
</feature>
<feature type="strand" evidence="4">
    <location>
        <begin position="567"/>
        <end position="569"/>
    </location>
</feature>
<feature type="helix" evidence="4">
    <location>
        <begin position="571"/>
        <end position="573"/>
    </location>
</feature>
<feature type="strand" evidence="4">
    <location>
        <begin position="574"/>
        <end position="577"/>
    </location>
</feature>
<feature type="strand" evidence="4">
    <location>
        <begin position="579"/>
        <end position="585"/>
    </location>
</feature>
<feature type="strand" evidence="4">
    <location>
        <begin position="591"/>
        <end position="600"/>
    </location>
</feature>
<feature type="strand" evidence="4">
    <location>
        <begin position="608"/>
        <end position="613"/>
    </location>
</feature>
<feature type="strand" evidence="4">
    <location>
        <begin position="615"/>
        <end position="626"/>
    </location>
</feature>
<feature type="strand" evidence="4">
    <location>
        <begin position="635"/>
        <end position="642"/>
    </location>
</feature>
<feature type="helix" evidence="4">
    <location>
        <begin position="643"/>
        <end position="645"/>
    </location>
</feature>
<feature type="turn" evidence="4">
    <location>
        <begin position="646"/>
        <end position="648"/>
    </location>
</feature>
<feature type="strand" evidence="9">
    <location>
        <begin position="651"/>
        <end position="655"/>
    </location>
</feature>
<feature type="strand" evidence="4">
    <location>
        <begin position="661"/>
        <end position="664"/>
    </location>
</feature>
<feature type="strand" evidence="4">
    <location>
        <begin position="669"/>
        <end position="676"/>
    </location>
</feature>
<feature type="strand" evidence="4">
    <location>
        <begin position="680"/>
        <end position="691"/>
    </location>
</feature>
<feature type="strand" evidence="4">
    <location>
        <begin position="693"/>
        <end position="695"/>
    </location>
</feature>
<feature type="strand" evidence="4">
    <location>
        <begin position="701"/>
        <end position="704"/>
    </location>
</feature>
<feature type="strand" evidence="4">
    <location>
        <begin position="707"/>
        <end position="716"/>
    </location>
</feature>
<protein>
    <recommendedName>
        <fullName>Cyclomaltodextrin glucanotransferase</fullName>
        <ecNumber>2.4.1.19</ecNumber>
    </recommendedName>
    <alternativeName>
        <fullName>Cyclodextrin-glycosyltransferase</fullName>
        <shortName>CGTase</shortName>
    </alternativeName>
</protein>
<evidence type="ECO:0000250" key="1"/>
<evidence type="ECO:0000255" key="2">
    <source>
        <dbReference type="PROSITE-ProRule" id="PRU00594"/>
    </source>
</evidence>
<evidence type="ECO:0000305" key="3"/>
<evidence type="ECO:0007829" key="4">
    <source>
        <dbReference type="PDB" id="1CGT"/>
    </source>
</evidence>
<evidence type="ECO:0007829" key="5">
    <source>
        <dbReference type="PDB" id="1CGU"/>
    </source>
</evidence>
<evidence type="ECO:0007829" key="6">
    <source>
        <dbReference type="PDB" id="3CGT"/>
    </source>
</evidence>
<evidence type="ECO:0007829" key="7">
    <source>
        <dbReference type="PDB" id="4CGT"/>
    </source>
</evidence>
<evidence type="ECO:0007829" key="8">
    <source>
        <dbReference type="PDB" id="5CGT"/>
    </source>
</evidence>
<evidence type="ECO:0007829" key="9">
    <source>
        <dbReference type="PDB" id="6CGT"/>
    </source>
</evidence>
<reference key="1">
    <citation type="journal article" date="1990" name="Appl. Microbiol. Biotechnol.">
        <title>Molecular cloning, nucleotide sequence and expression in Escherichia coli of the beta-cyclodextrin glycosyltransferase gene from Bacillus circulans strain no. 8.</title>
        <authorList>
            <person name="Nitschke L."/>
            <person name="Heeger K."/>
            <person name="Bender H."/>
            <person name="Schulz G.E."/>
        </authorList>
    </citation>
    <scope>NUCLEOTIDE SEQUENCE [GENOMIC DNA]</scope>
    <source>
        <strain>8</strain>
    </source>
</reference>
<reference key="2">
    <citation type="journal article" date="1991" name="J. Mol. Biol.">
        <title>Structure of cyclodextrin glycosyltransferase refined at 2.0-A resolution.</title>
        <authorList>
            <person name="Klein C."/>
            <person name="Schulz G.E."/>
        </authorList>
    </citation>
    <scope>X-RAY CRYSTALLOGRAPHY (2.0 ANGSTROMS)</scope>
    <source>
        <strain>8</strain>
    </source>
</reference>
<reference key="3">
    <citation type="journal article" date="1989" name="J. Mol. Biol.">
        <title>Three-dimensional structure of cyclodextrin glycosyltransferase from Bacillus circulans at 3.4-A resolution.</title>
        <authorList>
            <person name="Hofmann B.E."/>
            <person name="Bender H."/>
            <person name="Schulz G.E."/>
        </authorList>
    </citation>
    <scope>X-RAY CRYSTALLOGRAPHY (3.4 ANGSTROMS)</scope>
    <source>
        <strain>8</strain>
    </source>
</reference>
<reference key="4">
    <citation type="journal article" date="1998" name="Biochemistry">
        <title>Structure of cyclodextrin glycosyltransferase complexed with a derivative of its main product beta-cyclodextrin.</title>
        <authorList>
            <person name="Schmidt A.K."/>
            <person name="Cottaz S."/>
            <person name="Driguez H."/>
            <person name="Schulz G.E."/>
        </authorList>
    </citation>
    <scope>X-RAY CRYSTALLOGRAPHY (2.4 ANGSTROMS)</scope>
    <source>
        <strain>8</strain>
    </source>
</reference>
<reference key="5">
    <citation type="journal article" date="1998" name="Eur. J. Biochem.">
        <title>Substrate binding to a cyclodextrin glycosyltransferase and mutations increasing the gamma-cyclodextrin production.</title>
        <authorList>
            <person name="Parsiegla G."/>
            <person name="Schmidt A.K."/>
            <person name="Schulz G.E."/>
        </authorList>
    </citation>
    <scope>X-RAY CRYSTALLOGRAPHY (2.6 ANGSTROMS)</scope>
    <source>
        <strain>8</strain>
    </source>
</reference>
<accession>P30920</accession>
<keyword id="KW-0002">3D-structure</keyword>
<keyword id="KW-0106">Calcium</keyword>
<keyword id="KW-1015">Disulfide bond</keyword>
<keyword id="KW-0328">Glycosyltransferase</keyword>
<keyword id="KW-0479">Metal-binding</keyword>
<keyword id="KW-0964">Secreted</keyword>
<keyword id="KW-0732">Signal</keyword>
<keyword id="KW-0808">Transferase</keyword>